<accession>P24685</accession>
<organism>
    <name type="scientific">Pinus contorta</name>
    <name type="common">Shore pine</name>
    <name type="synonym">Lodgepole pine</name>
    <dbReference type="NCBI Taxonomy" id="3339"/>
    <lineage>
        <taxon>Eukaryota</taxon>
        <taxon>Viridiplantae</taxon>
        <taxon>Streptophyta</taxon>
        <taxon>Embryophyta</taxon>
        <taxon>Tracheophyta</taxon>
        <taxon>Spermatophyta</taxon>
        <taxon>Pinopsida</taxon>
        <taxon>Pinidae</taxon>
        <taxon>Conifers I</taxon>
        <taxon>Pinales</taxon>
        <taxon>Pinaceae</taxon>
        <taxon>Pinus</taxon>
        <taxon>Pinus subgen. Pinus</taxon>
    </lineage>
</organism>
<proteinExistence type="inferred from homology"/>
<keyword id="KW-0150">Chloroplast</keyword>
<keyword id="KW-0507">mRNA processing</keyword>
<keyword id="KW-0934">Plastid</keyword>
<keyword id="KW-0694">RNA-binding</keyword>
<keyword id="KW-0819">tRNA processing</keyword>
<comment type="function">
    <text evidence="1">Usually encoded in the trnK tRNA gene intron. Probably assists in splicing its own and other chloroplast group II introns.</text>
</comment>
<comment type="subcellular location">
    <subcellularLocation>
        <location>Plastid</location>
        <location>Chloroplast</location>
    </subcellularLocation>
</comment>
<comment type="similarity">
    <text evidence="1">Belongs to the intron maturase 2 family. MatK subfamily.</text>
</comment>
<dbReference type="EMBL" id="X57097">
    <property type="protein sequence ID" value="CAA40382.1"/>
    <property type="molecule type" value="Genomic_DNA"/>
</dbReference>
<dbReference type="EMBL" id="AB080921">
    <property type="protein sequence ID" value="BAC11924.1"/>
    <property type="molecule type" value="Genomic_DNA"/>
</dbReference>
<dbReference type="PIR" id="S22550">
    <property type="entry name" value="S22550"/>
</dbReference>
<dbReference type="GO" id="GO:0009507">
    <property type="term" value="C:chloroplast"/>
    <property type="evidence" value="ECO:0007669"/>
    <property type="project" value="UniProtKB-SubCell"/>
</dbReference>
<dbReference type="GO" id="GO:0003723">
    <property type="term" value="F:RNA binding"/>
    <property type="evidence" value="ECO:0007669"/>
    <property type="project" value="UniProtKB-KW"/>
</dbReference>
<dbReference type="GO" id="GO:0006397">
    <property type="term" value="P:mRNA processing"/>
    <property type="evidence" value="ECO:0007669"/>
    <property type="project" value="UniProtKB-KW"/>
</dbReference>
<dbReference type="GO" id="GO:0008380">
    <property type="term" value="P:RNA splicing"/>
    <property type="evidence" value="ECO:0007669"/>
    <property type="project" value="UniProtKB-UniRule"/>
</dbReference>
<dbReference type="GO" id="GO:0008033">
    <property type="term" value="P:tRNA processing"/>
    <property type="evidence" value="ECO:0007669"/>
    <property type="project" value="UniProtKB-KW"/>
</dbReference>
<dbReference type="HAMAP" id="MF_01390">
    <property type="entry name" value="MatK"/>
    <property type="match status" value="1"/>
</dbReference>
<dbReference type="InterPro" id="IPR024937">
    <property type="entry name" value="Domain_X"/>
</dbReference>
<dbReference type="InterPro" id="IPR002866">
    <property type="entry name" value="Maturase_MatK"/>
</dbReference>
<dbReference type="InterPro" id="IPR024942">
    <property type="entry name" value="Maturase_MatK_N"/>
</dbReference>
<dbReference type="PANTHER" id="PTHR34811">
    <property type="entry name" value="MATURASE K"/>
    <property type="match status" value="1"/>
</dbReference>
<dbReference type="PANTHER" id="PTHR34811:SF1">
    <property type="entry name" value="MATURASE K"/>
    <property type="match status" value="1"/>
</dbReference>
<dbReference type="Pfam" id="PF01348">
    <property type="entry name" value="Intron_maturas2"/>
    <property type="match status" value="1"/>
</dbReference>
<dbReference type="Pfam" id="PF01824">
    <property type="entry name" value="MatK_N"/>
    <property type="match status" value="1"/>
</dbReference>
<evidence type="ECO:0000255" key="1">
    <source>
        <dbReference type="HAMAP-Rule" id="MF_01390"/>
    </source>
</evidence>
<feature type="chain" id="PRO_0000143608" description="Maturase K">
    <location>
        <begin position="1"/>
        <end position="515"/>
    </location>
</feature>
<reference key="1">
    <citation type="journal article" date="1991" name="Nucleic Acids Res.">
        <title>A three-step model for the rearrangement of the chloroplast trnK-psbA region of the gymnosperm Pinus contorta.</title>
        <authorList>
            <person name="Lidholm J.A."/>
            <person name="Gustafsson P."/>
        </authorList>
    </citation>
    <scope>NUCLEOTIDE SEQUENCE [GENOMIC DNA]</scope>
    <source>
        <tissue>Leaf</tissue>
    </source>
</reference>
<reference key="2">
    <citation type="submission" date="2002-03" db="EMBL/GenBank/DDBJ databases">
        <title>Phylogeny of the North American pines.</title>
        <authorList>
            <person name="Geada Lopez G."/>
            <person name="Kamiya K."/>
            <person name="Harada K."/>
        </authorList>
    </citation>
    <scope>NUCLEOTIDE SEQUENCE [GENOMIC DNA]</scope>
    <source>
        <tissue>Leaf</tissue>
    </source>
</reference>
<protein>
    <recommendedName>
        <fullName evidence="1">Maturase K</fullName>
    </recommendedName>
    <alternativeName>
        <fullName evidence="1">Intron maturase</fullName>
    </alternativeName>
</protein>
<sequence length="515" mass="60872">MDEFHRCGKEDSFWQQCFLYPLFFKEDLYAISHDHYLDVSSSSRPMEHLSSNDQLSFLTVKRLIGQIRQQNHSIVLFVNCDPNPLADRKKSFYSESVLEALTLVLEVPFSIWSKYSVEGMNESKSFRSIHSIFPFLEDKFPHSNSILDARIPYSIHPEILVRTFRRWIRDAPSLHPLRSVLYEYRNSTENLQRSIIVVPRVNTRFFLFLWNYYVCECESILFSRLKRSSHSRSLSHGSFPQRTHFHRKIKHIIIFSRRNSLKSIWSLKDPKIHYVRYGERPIIAIKGAHLLVKKCRYYLLIFRQFYFHLWSEPYRVCSHQLSKNCSSSPGYFLRVRMNPILVRTKMLDELFIADLITDEIDPIVPIVPIIGLLATEKFCDISGRPISKLSWTSLTDDDILDRFDQIWRNLFHYYSGSFDRDGLYRIKYILSLSCAKTLACKHKSTIRVVRKELGPELFKKSFSKEREFDSLPFSSKAAARSQRERIWHSDIPQINPLANSWQKIQDLKIGNLFDQ</sequence>
<gene>
    <name evidence="1" type="primary">matK</name>
    <name type="synonym">ycf14</name>
</gene>
<geneLocation type="chloroplast"/>
<name>MATK_PINCO</name>